<keyword id="KW-0067">ATP-binding</keyword>
<keyword id="KW-0963">Cytoplasm</keyword>
<keyword id="KW-0418">Kinase</keyword>
<keyword id="KW-0479">Metal-binding</keyword>
<keyword id="KW-0545">Nucleotide biosynthesis</keyword>
<keyword id="KW-0547">Nucleotide-binding</keyword>
<keyword id="KW-0808">Transferase</keyword>
<keyword id="KW-0862">Zinc</keyword>
<organism>
    <name type="scientific">Bacillus cereus (strain AH187)</name>
    <dbReference type="NCBI Taxonomy" id="405534"/>
    <lineage>
        <taxon>Bacteria</taxon>
        <taxon>Bacillati</taxon>
        <taxon>Bacillota</taxon>
        <taxon>Bacilli</taxon>
        <taxon>Bacillales</taxon>
        <taxon>Bacillaceae</taxon>
        <taxon>Bacillus</taxon>
        <taxon>Bacillus cereus group</taxon>
    </lineage>
</organism>
<name>KAD_BACC7</name>
<dbReference type="EC" id="2.7.4.3" evidence="1"/>
<dbReference type="EMBL" id="CP001177">
    <property type="protein sequence ID" value="ACJ82261.1"/>
    <property type="molecule type" value="Genomic_DNA"/>
</dbReference>
<dbReference type="SMR" id="B7HQW5"/>
<dbReference type="KEGG" id="bcr:BCAH187_A0162"/>
<dbReference type="HOGENOM" id="CLU_032354_1_2_9"/>
<dbReference type="UniPathway" id="UPA00588">
    <property type="reaction ID" value="UER00649"/>
</dbReference>
<dbReference type="Proteomes" id="UP000002214">
    <property type="component" value="Chromosome"/>
</dbReference>
<dbReference type="GO" id="GO:0005737">
    <property type="term" value="C:cytoplasm"/>
    <property type="evidence" value="ECO:0007669"/>
    <property type="project" value="UniProtKB-SubCell"/>
</dbReference>
<dbReference type="GO" id="GO:0004017">
    <property type="term" value="F:adenylate kinase activity"/>
    <property type="evidence" value="ECO:0007669"/>
    <property type="project" value="UniProtKB-UniRule"/>
</dbReference>
<dbReference type="GO" id="GO:0005524">
    <property type="term" value="F:ATP binding"/>
    <property type="evidence" value="ECO:0007669"/>
    <property type="project" value="UniProtKB-UniRule"/>
</dbReference>
<dbReference type="GO" id="GO:0008270">
    <property type="term" value="F:zinc ion binding"/>
    <property type="evidence" value="ECO:0007669"/>
    <property type="project" value="UniProtKB-UniRule"/>
</dbReference>
<dbReference type="GO" id="GO:0044209">
    <property type="term" value="P:AMP salvage"/>
    <property type="evidence" value="ECO:0007669"/>
    <property type="project" value="UniProtKB-UniRule"/>
</dbReference>
<dbReference type="CDD" id="cd01428">
    <property type="entry name" value="ADK"/>
    <property type="match status" value="1"/>
</dbReference>
<dbReference type="FunFam" id="3.40.50.300:FF:000106">
    <property type="entry name" value="Adenylate kinase mitochondrial"/>
    <property type="match status" value="1"/>
</dbReference>
<dbReference type="Gene3D" id="3.40.50.300">
    <property type="entry name" value="P-loop containing nucleotide triphosphate hydrolases"/>
    <property type="match status" value="1"/>
</dbReference>
<dbReference type="HAMAP" id="MF_00235">
    <property type="entry name" value="Adenylate_kinase_Adk"/>
    <property type="match status" value="1"/>
</dbReference>
<dbReference type="InterPro" id="IPR006259">
    <property type="entry name" value="Adenyl_kin_sub"/>
</dbReference>
<dbReference type="InterPro" id="IPR000850">
    <property type="entry name" value="Adenylat/UMP-CMP_kin"/>
</dbReference>
<dbReference type="InterPro" id="IPR033690">
    <property type="entry name" value="Adenylat_kinase_CS"/>
</dbReference>
<dbReference type="InterPro" id="IPR007862">
    <property type="entry name" value="Adenylate_kinase_lid-dom"/>
</dbReference>
<dbReference type="InterPro" id="IPR027417">
    <property type="entry name" value="P-loop_NTPase"/>
</dbReference>
<dbReference type="NCBIfam" id="TIGR01351">
    <property type="entry name" value="adk"/>
    <property type="match status" value="1"/>
</dbReference>
<dbReference type="NCBIfam" id="NF001380">
    <property type="entry name" value="PRK00279.1-2"/>
    <property type="match status" value="1"/>
</dbReference>
<dbReference type="NCBIfam" id="NF001381">
    <property type="entry name" value="PRK00279.1-3"/>
    <property type="match status" value="1"/>
</dbReference>
<dbReference type="NCBIfam" id="NF011100">
    <property type="entry name" value="PRK14527.1"/>
    <property type="match status" value="1"/>
</dbReference>
<dbReference type="PANTHER" id="PTHR23359">
    <property type="entry name" value="NUCLEOTIDE KINASE"/>
    <property type="match status" value="1"/>
</dbReference>
<dbReference type="Pfam" id="PF00406">
    <property type="entry name" value="ADK"/>
    <property type="match status" value="1"/>
</dbReference>
<dbReference type="Pfam" id="PF05191">
    <property type="entry name" value="ADK_lid"/>
    <property type="match status" value="1"/>
</dbReference>
<dbReference type="PRINTS" id="PR00094">
    <property type="entry name" value="ADENYLTKNASE"/>
</dbReference>
<dbReference type="SUPFAM" id="SSF52540">
    <property type="entry name" value="P-loop containing nucleoside triphosphate hydrolases"/>
    <property type="match status" value="1"/>
</dbReference>
<dbReference type="PROSITE" id="PS00113">
    <property type="entry name" value="ADENYLATE_KINASE"/>
    <property type="match status" value="1"/>
</dbReference>
<accession>B7HQW5</accession>
<proteinExistence type="inferred from homology"/>
<sequence length="216" mass="23769">MNLILMGLPGAGKGTQAEQIVAKYNIPHISTGDMFRAAMKAETEMGLQAKSFIDKGALVPDEVTIGIVRERLSQEDCVRGFLLDGFPRTVAQASALEEIMKDLGKKIDYVLNINVDSGLLLKRLTGRRICKECGATYHLEFNPPAKADVCDKCGGELYQRSDDNEETVANRLDVNIKQTKPLLDFYEELGYLQSINGEQDINKVFADIDVLIGGLA</sequence>
<reference key="1">
    <citation type="submission" date="2008-10" db="EMBL/GenBank/DDBJ databases">
        <title>Genome sequence of Bacillus cereus AH187.</title>
        <authorList>
            <person name="Dodson R.J."/>
            <person name="Durkin A.S."/>
            <person name="Rosovitz M.J."/>
            <person name="Rasko D.A."/>
            <person name="Kolsto A.B."/>
            <person name="Okstad O.A."/>
            <person name="Ravel J."/>
            <person name="Sutton G."/>
        </authorList>
    </citation>
    <scope>NUCLEOTIDE SEQUENCE [LARGE SCALE GENOMIC DNA]</scope>
    <source>
        <strain>AH187</strain>
    </source>
</reference>
<gene>
    <name evidence="1" type="primary">adk</name>
    <name type="ordered locus">BCAH187_A0162</name>
</gene>
<evidence type="ECO:0000255" key="1">
    <source>
        <dbReference type="HAMAP-Rule" id="MF_00235"/>
    </source>
</evidence>
<comment type="function">
    <text evidence="1">Catalyzes the reversible transfer of the terminal phosphate group between ATP and AMP. Plays an important role in cellular energy homeostasis and in adenine nucleotide metabolism.</text>
</comment>
<comment type="catalytic activity">
    <reaction evidence="1">
        <text>AMP + ATP = 2 ADP</text>
        <dbReference type="Rhea" id="RHEA:12973"/>
        <dbReference type="ChEBI" id="CHEBI:30616"/>
        <dbReference type="ChEBI" id="CHEBI:456215"/>
        <dbReference type="ChEBI" id="CHEBI:456216"/>
        <dbReference type="EC" id="2.7.4.3"/>
    </reaction>
</comment>
<comment type="pathway">
    <text evidence="1">Purine metabolism; AMP biosynthesis via salvage pathway; AMP from ADP: step 1/1.</text>
</comment>
<comment type="subunit">
    <text evidence="1">Monomer.</text>
</comment>
<comment type="subcellular location">
    <subcellularLocation>
        <location evidence="1">Cytoplasm</location>
    </subcellularLocation>
</comment>
<comment type="domain">
    <text evidence="1">Consists of three domains, a large central CORE domain and two small peripheral domains, NMPbind and LID, which undergo movements during catalysis. The LID domain closes over the site of phosphoryl transfer upon ATP binding. Assembling and dissambling the active center during each catalytic cycle provides an effective means to prevent ATP hydrolysis. Some bacteria have evolved a zinc-coordinating structure that stabilizes the LID domain.</text>
</comment>
<comment type="similarity">
    <text evidence="1">Belongs to the adenylate kinase family.</text>
</comment>
<protein>
    <recommendedName>
        <fullName evidence="1">Adenylate kinase</fullName>
        <shortName evidence="1">AK</shortName>
        <ecNumber evidence="1">2.7.4.3</ecNumber>
    </recommendedName>
    <alternativeName>
        <fullName evidence="1">ATP-AMP transphosphorylase</fullName>
    </alternativeName>
    <alternativeName>
        <fullName evidence="1">ATP:AMP phosphotransferase</fullName>
    </alternativeName>
    <alternativeName>
        <fullName evidence="1">Adenylate monophosphate kinase</fullName>
    </alternativeName>
</protein>
<feature type="chain" id="PRO_1000118985" description="Adenylate kinase">
    <location>
        <begin position="1"/>
        <end position="216"/>
    </location>
</feature>
<feature type="region of interest" description="NMP" evidence="1">
    <location>
        <begin position="30"/>
        <end position="59"/>
    </location>
</feature>
<feature type="region of interest" description="LID" evidence="1">
    <location>
        <begin position="126"/>
        <end position="163"/>
    </location>
</feature>
<feature type="binding site" evidence="1">
    <location>
        <begin position="10"/>
        <end position="15"/>
    </location>
    <ligand>
        <name>ATP</name>
        <dbReference type="ChEBI" id="CHEBI:30616"/>
    </ligand>
</feature>
<feature type="binding site" evidence="1">
    <location>
        <position position="31"/>
    </location>
    <ligand>
        <name>AMP</name>
        <dbReference type="ChEBI" id="CHEBI:456215"/>
    </ligand>
</feature>
<feature type="binding site" evidence="1">
    <location>
        <position position="36"/>
    </location>
    <ligand>
        <name>AMP</name>
        <dbReference type="ChEBI" id="CHEBI:456215"/>
    </ligand>
</feature>
<feature type="binding site" evidence="1">
    <location>
        <begin position="57"/>
        <end position="59"/>
    </location>
    <ligand>
        <name>AMP</name>
        <dbReference type="ChEBI" id="CHEBI:456215"/>
    </ligand>
</feature>
<feature type="binding site" evidence="1">
    <location>
        <begin position="85"/>
        <end position="88"/>
    </location>
    <ligand>
        <name>AMP</name>
        <dbReference type="ChEBI" id="CHEBI:456215"/>
    </ligand>
</feature>
<feature type="binding site" evidence="1">
    <location>
        <position position="92"/>
    </location>
    <ligand>
        <name>AMP</name>
        <dbReference type="ChEBI" id="CHEBI:456215"/>
    </ligand>
</feature>
<feature type="binding site" evidence="1">
    <location>
        <position position="127"/>
    </location>
    <ligand>
        <name>ATP</name>
        <dbReference type="ChEBI" id="CHEBI:30616"/>
    </ligand>
</feature>
<feature type="binding site" evidence="1">
    <location>
        <position position="130"/>
    </location>
    <ligand>
        <name>Zn(2+)</name>
        <dbReference type="ChEBI" id="CHEBI:29105"/>
        <note>structural</note>
    </ligand>
</feature>
<feature type="binding site" evidence="1">
    <location>
        <position position="133"/>
    </location>
    <ligand>
        <name>Zn(2+)</name>
        <dbReference type="ChEBI" id="CHEBI:29105"/>
        <note>structural</note>
    </ligand>
</feature>
<feature type="binding site" evidence="1">
    <location>
        <begin position="136"/>
        <end position="137"/>
    </location>
    <ligand>
        <name>ATP</name>
        <dbReference type="ChEBI" id="CHEBI:30616"/>
    </ligand>
</feature>
<feature type="binding site" evidence="1">
    <location>
        <position position="150"/>
    </location>
    <ligand>
        <name>Zn(2+)</name>
        <dbReference type="ChEBI" id="CHEBI:29105"/>
        <note>structural</note>
    </ligand>
</feature>
<feature type="binding site" evidence="1">
    <location>
        <position position="153"/>
    </location>
    <ligand>
        <name>Zn(2+)</name>
        <dbReference type="ChEBI" id="CHEBI:29105"/>
        <note>structural</note>
    </ligand>
</feature>
<feature type="binding site" evidence="1">
    <location>
        <position position="160"/>
    </location>
    <ligand>
        <name>AMP</name>
        <dbReference type="ChEBI" id="CHEBI:456215"/>
    </ligand>
</feature>
<feature type="binding site" evidence="1">
    <location>
        <position position="171"/>
    </location>
    <ligand>
        <name>AMP</name>
        <dbReference type="ChEBI" id="CHEBI:456215"/>
    </ligand>
</feature>
<feature type="binding site" evidence="1">
    <location>
        <position position="199"/>
    </location>
    <ligand>
        <name>ATP</name>
        <dbReference type="ChEBI" id="CHEBI:30616"/>
    </ligand>
</feature>